<reference key="1">
    <citation type="journal article" date="2002" name="DNA Res.">
        <title>Complete genomic sequence of nitrogen-fixing symbiotic bacterium Bradyrhizobium japonicum USDA110.</title>
        <authorList>
            <person name="Kaneko T."/>
            <person name="Nakamura Y."/>
            <person name="Sato S."/>
            <person name="Minamisawa K."/>
            <person name="Uchiumi T."/>
            <person name="Sasamoto S."/>
            <person name="Watanabe A."/>
            <person name="Idesawa K."/>
            <person name="Iriguchi M."/>
            <person name="Kawashima K."/>
            <person name="Kohara M."/>
            <person name="Matsumoto M."/>
            <person name="Shimpo S."/>
            <person name="Tsuruoka H."/>
            <person name="Wada T."/>
            <person name="Yamada M."/>
            <person name="Tabata S."/>
        </authorList>
    </citation>
    <scope>NUCLEOTIDE SEQUENCE [LARGE SCALE GENOMIC DNA]</scope>
    <source>
        <strain>JCM 10833 / BCRC 13528 / IAM 13628 / NBRC 14792 / USDA 110</strain>
    </source>
</reference>
<evidence type="ECO:0000255" key="1">
    <source>
        <dbReference type="HAMAP-Rule" id="MF_00802"/>
    </source>
</evidence>
<name>GLNE_BRADU</name>
<dbReference type="EC" id="2.7.7.89" evidence="1"/>
<dbReference type="EC" id="2.7.7.42" evidence="1"/>
<dbReference type="EMBL" id="BA000040">
    <property type="protein sequence ID" value="BAC48398.1"/>
    <property type="molecule type" value="Genomic_DNA"/>
</dbReference>
<dbReference type="RefSeq" id="NP_769773.1">
    <property type="nucleotide sequence ID" value="NC_004463.1"/>
</dbReference>
<dbReference type="RefSeq" id="WP_011085917.1">
    <property type="nucleotide sequence ID" value="NC_004463.1"/>
</dbReference>
<dbReference type="SMR" id="Q89QJ5"/>
<dbReference type="FunCoup" id="Q89QJ5">
    <property type="interactions" value="242"/>
</dbReference>
<dbReference type="STRING" id="224911.AAV28_12690"/>
<dbReference type="EnsemblBacteria" id="BAC48398">
    <property type="protein sequence ID" value="BAC48398"/>
    <property type="gene ID" value="BAC48398"/>
</dbReference>
<dbReference type="GeneID" id="46490171"/>
<dbReference type="KEGG" id="bja:blr3133"/>
<dbReference type="PATRIC" id="fig|224911.44.peg.2766"/>
<dbReference type="eggNOG" id="COG1391">
    <property type="taxonomic scope" value="Bacteria"/>
</dbReference>
<dbReference type="HOGENOM" id="CLU_006233_0_0_5"/>
<dbReference type="InParanoid" id="Q89QJ5"/>
<dbReference type="OrthoDB" id="9759366at2"/>
<dbReference type="PhylomeDB" id="Q89QJ5"/>
<dbReference type="Proteomes" id="UP000002526">
    <property type="component" value="Chromosome"/>
</dbReference>
<dbReference type="GO" id="GO:0005829">
    <property type="term" value="C:cytosol"/>
    <property type="evidence" value="ECO:0000318"/>
    <property type="project" value="GO_Central"/>
</dbReference>
<dbReference type="GO" id="GO:0008882">
    <property type="term" value="F:[glutamate-ammonia-ligase] adenylyltransferase activity"/>
    <property type="evidence" value="ECO:0000318"/>
    <property type="project" value="GO_Central"/>
</dbReference>
<dbReference type="GO" id="GO:0047388">
    <property type="term" value="F:[glutamine synthetase]-adenylyl-L-tyrosine phosphorylase activity"/>
    <property type="evidence" value="ECO:0007669"/>
    <property type="project" value="UniProtKB-EC"/>
</dbReference>
<dbReference type="GO" id="GO:0005524">
    <property type="term" value="F:ATP binding"/>
    <property type="evidence" value="ECO:0007669"/>
    <property type="project" value="UniProtKB-UniRule"/>
</dbReference>
<dbReference type="GO" id="GO:0000287">
    <property type="term" value="F:magnesium ion binding"/>
    <property type="evidence" value="ECO:0007669"/>
    <property type="project" value="UniProtKB-UniRule"/>
</dbReference>
<dbReference type="GO" id="GO:0000820">
    <property type="term" value="P:regulation of glutamine family amino acid metabolic process"/>
    <property type="evidence" value="ECO:0000318"/>
    <property type="project" value="GO_Central"/>
</dbReference>
<dbReference type="CDD" id="cd05401">
    <property type="entry name" value="NT_GlnE_GlnD_like"/>
    <property type="match status" value="2"/>
</dbReference>
<dbReference type="FunFam" id="1.20.120.330:FF:000028">
    <property type="entry name" value="Bifunctional glutamine synthetase adenylyltransferase/adenylyl-removing enzyme"/>
    <property type="match status" value="1"/>
</dbReference>
<dbReference type="FunFam" id="1.20.120.330:FF:000034">
    <property type="entry name" value="Bifunctional glutamine synthetase adenylyltransferase/adenylyl-removing enzyme"/>
    <property type="match status" value="1"/>
</dbReference>
<dbReference type="FunFam" id="3.30.460.10:FF:000081">
    <property type="entry name" value="Bifunctional glutamine synthetase adenylyltransferase/adenylyl-removing enzyme"/>
    <property type="match status" value="1"/>
</dbReference>
<dbReference type="FunFam" id="3.30.460.10:FF:000097">
    <property type="entry name" value="Bifunctional glutamine synthetase adenylyltransferase/adenylyl-removing enzyme"/>
    <property type="match status" value="1"/>
</dbReference>
<dbReference type="Gene3D" id="3.30.460.10">
    <property type="entry name" value="Beta Polymerase, domain 2"/>
    <property type="match status" value="2"/>
</dbReference>
<dbReference type="Gene3D" id="1.20.120.330">
    <property type="entry name" value="Nucleotidyltransferases domain 2"/>
    <property type="match status" value="2"/>
</dbReference>
<dbReference type="HAMAP" id="MF_00802">
    <property type="entry name" value="GlnE"/>
    <property type="match status" value="1"/>
</dbReference>
<dbReference type="InterPro" id="IPR023057">
    <property type="entry name" value="GlnE"/>
</dbReference>
<dbReference type="InterPro" id="IPR005190">
    <property type="entry name" value="GlnE_rpt_dom"/>
</dbReference>
<dbReference type="InterPro" id="IPR043519">
    <property type="entry name" value="NT_sf"/>
</dbReference>
<dbReference type="InterPro" id="IPR013546">
    <property type="entry name" value="PII_UdlTrfase/GS_AdlTrfase"/>
</dbReference>
<dbReference type="NCBIfam" id="NF008292">
    <property type="entry name" value="PRK11072.1"/>
    <property type="match status" value="1"/>
</dbReference>
<dbReference type="NCBIfam" id="NF010706">
    <property type="entry name" value="PRK14108.1"/>
    <property type="match status" value="1"/>
</dbReference>
<dbReference type="PANTHER" id="PTHR30621:SF0">
    <property type="entry name" value="BIFUNCTIONAL GLUTAMINE SYNTHETASE ADENYLYLTRANSFERASE_ADENYLYL-REMOVING ENZYME"/>
    <property type="match status" value="1"/>
</dbReference>
<dbReference type="PANTHER" id="PTHR30621">
    <property type="entry name" value="GLUTAMINE SYNTHETASE ADENYLYLTRANSFERASE"/>
    <property type="match status" value="1"/>
</dbReference>
<dbReference type="Pfam" id="PF08335">
    <property type="entry name" value="GlnD_UR_UTase"/>
    <property type="match status" value="2"/>
</dbReference>
<dbReference type="Pfam" id="PF03710">
    <property type="entry name" value="GlnE"/>
    <property type="match status" value="2"/>
</dbReference>
<dbReference type="SUPFAM" id="SSF81301">
    <property type="entry name" value="Nucleotidyltransferase"/>
    <property type="match status" value="2"/>
</dbReference>
<dbReference type="SUPFAM" id="SSF81593">
    <property type="entry name" value="Nucleotidyltransferase substrate binding subunit/domain"/>
    <property type="match status" value="2"/>
</dbReference>
<comment type="function">
    <text evidence="1">Involved in the regulation of glutamine synthetase GlnA, a key enzyme in the process to assimilate ammonia. When cellular nitrogen levels are high, the C-terminal adenylyl transferase (AT) inactivates GlnA by covalent transfer of an adenylyl group from ATP to specific tyrosine residue of GlnA, thus reducing its activity. Conversely, when nitrogen levels are low, the N-terminal adenylyl removase (AR) activates GlnA by removing the adenylyl group by phosphorolysis, increasing its activity. The regulatory region of GlnE binds the signal transduction protein PII (GlnB) which indicates the nitrogen status of the cell.</text>
</comment>
<comment type="catalytic activity">
    <reaction evidence="1">
        <text>[glutamine synthetase]-O(4)-(5'-adenylyl)-L-tyrosine + phosphate = [glutamine synthetase]-L-tyrosine + ADP</text>
        <dbReference type="Rhea" id="RHEA:43716"/>
        <dbReference type="Rhea" id="RHEA-COMP:10660"/>
        <dbReference type="Rhea" id="RHEA-COMP:10661"/>
        <dbReference type="ChEBI" id="CHEBI:43474"/>
        <dbReference type="ChEBI" id="CHEBI:46858"/>
        <dbReference type="ChEBI" id="CHEBI:83624"/>
        <dbReference type="ChEBI" id="CHEBI:456216"/>
        <dbReference type="EC" id="2.7.7.89"/>
    </reaction>
</comment>
<comment type="catalytic activity">
    <reaction evidence="1">
        <text>[glutamine synthetase]-L-tyrosine + ATP = [glutamine synthetase]-O(4)-(5'-adenylyl)-L-tyrosine + diphosphate</text>
        <dbReference type="Rhea" id="RHEA:18589"/>
        <dbReference type="Rhea" id="RHEA-COMP:10660"/>
        <dbReference type="Rhea" id="RHEA-COMP:10661"/>
        <dbReference type="ChEBI" id="CHEBI:30616"/>
        <dbReference type="ChEBI" id="CHEBI:33019"/>
        <dbReference type="ChEBI" id="CHEBI:46858"/>
        <dbReference type="ChEBI" id="CHEBI:83624"/>
        <dbReference type="EC" id="2.7.7.42"/>
    </reaction>
</comment>
<comment type="cofactor">
    <cofactor evidence="1">
        <name>Mg(2+)</name>
        <dbReference type="ChEBI" id="CHEBI:18420"/>
    </cofactor>
</comment>
<comment type="similarity">
    <text evidence="1">Belongs to the GlnE family.</text>
</comment>
<feature type="chain" id="PRO_0000209234" description="Bifunctional glutamine synthetase adenylyltransferase/adenylyl-removing enzyme">
    <location>
        <begin position="1"/>
        <end position="995"/>
    </location>
</feature>
<feature type="region of interest" description="Adenylyl removase" evidence="1">
    <location>
        <begin position="1"/>
        <end position="474"/>
    </location>
</feature>
<feature type="region of interest" description="GlnE 1">
    <location>
        <begin position="122"/>
        <end position="333"/>
    </location>
</feature>
<feature type="region of interest" description="Adenylyl transferase" evidence="1">
    <location>
        <begin position="479"/>
        <end position="995"/>
    </location>
</feature>
<feature type="region of interest" description="GlnE 2">
    <location>
        <begin position="637"/>
        <end position="853"/>
    </location>
</feature>
<proteinExistence type="inferred from homology"/>
<sequence>MNHSAPGNADKHGESLAARFAEAPHIAASTTDERRFESWLAELEPAQSARLEALLVQPFGRNILVGIAEFSPYLFDLVRADPLRLIRLLECDPDTHLAALIAEARGAVLAAPDEAEVMRLLRRMKAEAALLTALCDIGGVWPVMRVTSALTDVAVSSVQAALQYLLRQEAARGKLFPPNPEAPEEGCGLIVLAMGKMGAGELNYSSDIDLIVFFDPDATTLAPDIEPQPFFVRVTQGMARILQQRTYDGYVFRVDLRLRPDPSSTQVAISRDAALHYYEREGRTWERAAMIKARACAGDARAGEALLAEIAPFVWRKHLDFAALADVHDMKRQMQTYRGQSEVAVEGHNVKVGRGGIREIEFFAQTQQLIAGGRHPELRVRPTLAALDVLASSNWITLAARDELARAYEFLRRVEHRLQMVADEQTHALPDDREAVERFARFFGYPDREAFARDLLRQLEIVQGHYEKLFEGDDPTGTAKLPALDYSAGPDDPRLFQHLTTLGFKKPAAVAQTVRDWITGDYRVFRNEATRSAFIEFVPALIDGLALAEEPDRAVVAFDQFLGALQRGGRLITLLGQNRDLVALVALVLGAAPRLGEMLARQPQLMDGLIDPRFFGAMPDRRELSGRLAATVQDAASYEEFLDRLRLFGQESLFLIGTRILSGTVSAQQASTAFADVAEGVVHTVHDLVADRFAAQHGRIKGQETAIIAMGRLGSREMTASSDLDLILLYDFDSENPDSDGPKSLQGAHYFARFTQRLISAFTTRTNYGVLYEIDMRLRPSGRAGPVASSLASFADYQANEAWTWEHMALTRARVVSASAEFGERIAGVIRDVLTRRRDPATIANDVADMRRAIAQEKGETDYWDLKYAAGGMIDIDFIAQYLQLVHAHHKPDILDVSTLQVLDNAARLGVLPQSEAEILRAAARLYHDLTQILRLCVSDRFKPETAGTDLQRVMARAGDAPDFSSLEARVKETQSEVRRVFRALLEGTSPASAR</sequence>
<gene>
    <name evidence="1" type="primary">glnE</name>
    <name type="ordered locus">blr3133</name>
</gene>
<protein>
    <recommendedName>
        <fullName evidence="1">Bifunctional glutamine synthetase adenylyltransferase/adenylyl-removing enzyme</fullName>
    </recommendedName>
    <alternativeName>
        <fullName evidence="1">ATP:glutamine synthetase adenylyltransferase</fullName>
    </alternativeName>
    <alternativeName>
        <fullName evidence="1">ATase</fullName>
    </alternativeName>
    <domain>
        <recommendedName>
            <fullName evidence="1">Glutamine synthetase adenylyl-L-tyrosine phosphorylase</fullName>
            <ecNumber evidence="1">2.7.7.89</ecNumber>
        </recommendedName>
        <alternativeName>
            <fullName evidence="1">Adenylyl removase</fullName>
            <shortName evidence="1">AR</shortName>
            <shortName evidence="1">AT-N</shortName>
        </alternativeName>
    </domain>
    <domain>
        <recommendedName>
            <fullName evidence="1">Glutamine synthetase adenylyl transferase</fullName>
            <ecNumber evidence="1">2.7.7.42</ecNumber>
        </recommendedName>
        <alternativeName>
            <fullName evidence="1">Adenylyl transferase</fullName>
            <shortName evidence="1">AT</shortName>
            <shortName evidence="1">AT-C</shortName>
        </alternativeName>
    </domain>
</protein>
<keyword id="KW-0067">ATP-binding</keyword>
<keyword id="KW-0460">Magnesium</keyword>
<keyword id="KW-0511">Multifunctional enzyme</keyword>
<keyword id="KW-0547">Nucleotide-binding</keyword>
<keyword id="KW-0548">Nucleotidyltransferase</keyword>
<keyword id="KW-1185">Reference proteome</keyword>
<keyword id="KW-0808">Transferase</keyword>
<accession>Q89QJ5</accession>
<organism>
    <name type="scientific">Bradyrhizobium diazoefficiens (strain JCM 10833 / BCRC 13528 / IAM 13628 / NBRC 14792 / USDA 110)</name>
    <dbReference type="NCBI Taxonomy" id="224911"/>
    <lineage>
        <taxon>Bacteria</taxon>
        <taxon>Pseudomonadati</taxon>
        <taxon>Pseudomonadota</taxon>
        <taxon>Alphaproteobacteria</taxon>
        <taxon>Hyphomicrobiales</taxon>
        <taxon>Nitrobacteraceae</taxon>
        <taxon>Bradyrhizobium</taxon>
    </lineage>
</organism>